<accession>A9R075</accession>
<reference key="1">
    <citation type="journal article" date="2010" name="J. Bacteriol.">
        <title>Genome sequence of the deep-rooted Yersinia pestis strain Angola reveals new insights into the evolution and pangenome of the plague bacterium.</title>
        <authorList>
            <person name="Eppinger M."/>
            <person name="Worsham P.L."/>
            <person name="Nikolich M.P."/>
            <person name="Riley D.R."/>
            <person name="Sebastian Y."/>
            <person name="Mou S."/>
            <person name="Achtman M."/>
            <person name="Lindler L.E."/>
            <person name="Ravel J."/>
        </authorList>
    </citation>
    <scope>NUCLEOTIDE SEQUENCE [LARGE SCALE GENOMIC DNA]</scope>
    <source>
        <strain>Angola</strain>
    </source>
</reference>
<gene>
    <name type="primary">lsrC</name>
    <name type="ordered locus">YpAngola_A0859</name>
</gene>
<proteinExistence type="inferred from homology"/>
<organism>
    <name type="scientific">Yersinia pestis bv. Antiqua (strain Angola)</name>
    <dbReference type="NCBI Taxonomy" id="349746"/>
    <lineage>
        <taxon>Bacteria</taxon>
        <taxon>Pseudomonadati</taxon>
        <taxon>Pseudomonadota</taxon>
        <taxon>Gammaproteobacteria</taxon>
        <taxon>Enterobacterales</taxon>
        <taxon>Yersiniaceae</taxon>
        <taxon>Yersinia</taxon>
    </lineage>
</organism>
<keyword id="KW-0997">Cell inner membrane</keyword>
<keyword id="KW-1003">Cell membrane</keyword>
<keyword id="KW-0472">Membrane</keyword>
<keyword id="KW-0812">Transmembrane</keyword>
<keyword id="KW-1133">Transmembrane helix</keyword>
<keyword id="KW-0813">Transport</keyword>
<evidence type="ECO:0000250" key="1"/>
<evidence type="ECO:0000255" key="2"/>
<evidence type="ECO:0000305" key="3"/>
<sequence length="351" mass="37247">MLKFIQNNREGTALLAILTLFALLGIIDRNYFSLQTFTMIFSSAQILILLAIGATLVMLTRNIDVSVGSITGLCAVTVGMALNAGFGLAASCLFALLVGMVAGFFNGILVTWLRIPAIVATLGTLGLYRGLMLLLTGGKWIEGLPADLKSLSTPILFSISPIGWLTMLLILAMAWLLGKTAFGRSFYATGDNLQGARQLGVRTDSLRIFAFSMNGVMAALAGIVFASQIGFIPNQTGNGLEMKAIAACVLGGISLLGGTGTIIGAILGAFLLTQIDSVLVLLRLPAWWNDFIAGLVLLGVLVFDGRLRCAVERNIRQQKYARFTAQAIISDKKPTVSDNNPAASNKKKAAL</sequence>
<feature type="chain" id="PRO_0000351356" description="Autoinducer 2 import system permease protein LsrC">
    <location>
        <begin position="1"/>
        <end position="351"/>
    </location>
</feature>
<feature type="transmembrane region" description="Helical" evidence="2">
    <location>
        <begin position="14"/>
        <end position="34"/>
    </location>
</feature>
<feature type="transmembrane region" description="Helical" evidence="2">
    <location>
        <begin position="39"/>
        <end position="59"/>
    </location>
</feature>
<feature type="transmembrane region" description="Helical" evidence="2">
    <location>
        <begin position="70"/>
        <end position="90"/>
    </location>
</feature>
<feature type="transmembrane region" description="Helical" evidence="2">
    <location>
        <begin position="93"/>
        <end position="113"/>
    </location>
</feature>
<feature type="transmembrane region" description="Helical" evidence="2">
    <location>
        <begin position="115"/>
        <end position="135"/>
    </location>
</feature>
<feature type="transmembrane region" description="Helical" evidence="2">
    <location>
        <begin position="155"/>
        <end position="175"/>
    </location>
</feature>
<feature type="transmembrane region" description="Helical" evidence="2">
    <location>
        <begin position="213"/>
        <end position="233"/>
    </location>
</feature>
<feature type="transmembrane region" description="Helical" evidence="2">
    <location>
        <begin position="252"/>
        <end position="272"/>
    </location>
</feature>
<feature type="transmembrane region" description="Helical" evidence="2">
    <location>
        <begin position="284"/>
        <end position="304"/>
    </location>
</feature>
<dbReference type="EMBL" id="CP000901">
    <property type="protein sequence ID" value="ABX87718.1"/>
    <property type="molecule type" value="Genomic_DNA"/>
</dbReference>
<dbReference type="RefSeq" id="WP_002209191.1">
    <property type="nucleotide sequence ID" value="NZ_CP009935.1"/>
</dbReference>
<dbReference type="GeneID" id="57974199"/>
<dbReference type="KEGG" id="ypg:YpAngola_A0859"/>
<dbReference type="PATRIC" id="fig|349746.12.peg.1810"/>
<dbReference type="GO" id="GO:0005886">
    <property type="term" value="C:plasma membrane"/>
    <property type="evidence" value="ECO:0007669"/>
    <property type="project" value="UniProtKB-SubCell"/>
</dbReference>
<dbReference type="GO" id="GO:0022857">
    <property type="term" value="F:transmembrane transporter activity"/>
    <property type="evidence" value="ECO:0007669"/>
    <property type="project" value="InterPro"/>
</dbReference>
<dbReference type="CDD" id="cd06579">
    <property type="entry name" value="TM_PBP1_transp_AraH_like"/>
    <property type="match status" value="1"/>
</dbReference>
<dbReference type="InterPro" id="IPR001851">
    <property type="entry name" value="ABC_transp_permease"/>
</dbReference>
<dbReference type="NCBIfam" id="NF011961">
    <property type="entry name" value="PRK15432.1"/>
    <property type="match status" value="1"/>
</dbReference>
<dbReference type="PANTHER" id="PTHR32196">
    <property type="entry name" value="ABC TRANSPORTER PERMEASE PROTEIN YPHD-RELATED-RELATED"/>
    <property type="match status" value="1"/>
</dbReference>
<dbReference type="PANTHER" id="PTHR32196:SF29">
    <property type="entry name" value="AUTOINDUCER 2 IMPORT SYSTEM PERMEASE PROTEIN LSRC"/>
    <property type="match status" value="1"/>
</dbReference>
<dbReference type="Pfam" id="PF02653">
    <property type="entry name" value="BPD_transp_2"/>
    <property type="match status" value="1"/>
</dbReference>
<protein>
    <recommendedName>
        <fullName>Autoinducer 2 import system permease protein LsrC</fullName>
        <shortName>AI-2 import system permease protein LsrC</shortName>
    </recommendedName>
</protein>
<name>LSRC_YERPG</name>
<comment type="function">
    <text evidence="1">Part of the ABC transporter complex LsrABCD involved in autoinducer 2 (AI-2) import. Probably responsible for the translocation of the substrate across the membrane (By similarity).</text>
</comment>
<comment type="subunit">
    <text evidence="1">The complex is composed of two ATP-binding proteins (LsrA), two transmembrane proteins (LsrC and LsrD) and a solute-binding protein (LsrB).</text>
</comment>
<comment type="subcellular location">
    <subcellularLocation>
        <location evidence="1">Cell inner membrane</location>
        <topology evidence="1">Multi-pass membrane protein</topology>
    </subcellularLocation>
</comment>
<comment type="similarity">
    <text evidence="3">Belongs to the binding-protein-dependent transport system permease family. AraH/RbsC subfamily.</text>
</comment>